<gene>
    <name evidence="1" type="primary">rpmB</name>
    <name type="ordered locus">H16_A3034</name>
</gene>
<evidence type="ECO:0000255" key="1">
    <source>
        <dbReference type="HAMAP-Rule" id="MF_00373"/>
    </source>
</evidence>
<evidence type="ECO:0000305" key="2"/>
<reference key="1">
    <citation type="journal article" date="2006" name="Nat. Biotechnol.">
        <title>Genome sequence of the bioplastic-producing 'Knallgas' bacterium Ralstonia eutropha H16.</title>
        <authorList>
            <person name="Pohlmann A."/>
            <person name="Fricke W.F."/>
            <person name="Reinecke F."/>
            <person name="Kusian B."/>
            <person name="Liesegang H."/>
            <person name="Cramm R."/>
            <person name="Eitinger T."/>
            <person name="Ewering C."/>
            <person name="Poetter M."/>
            <person name="Schwartz E."/>
            <person name="Strittmatter A."/>
            <person name="Voss I."/>
            <person name="Gottschalk G."/>
            <person name="Steinbuechel A."/>
            <person name="Friedrich B."/>
            <person name="Bowien B."/>
        </authorList>
    </citation>
    <scope>NUCLEOTIDE SEQUENCE [LARGE SCALE GENOMIC DNA]</scope>
    <source>
        <strain>ATCC 17699 / DSM 428 / KCTC 22496 / NCIMB 10442 / H16 / Stanier 337</strain>
    </source>
</reference>
<keyword id="KW-1185">Reference proteome</keyword>
<keyword id="KW-0687">Ribonucleoprotein</keyword>
<keyword id="KW-0689">Ribosomal protein</keyword>
<name>RL28_CUPNH</name>
<dbReference type="EMBL" id="AM260479">
    <property type="protein sequence ID" value="CAJ94109.1"/>
    <property type="molecule type" value="Genomic_DNA"/>
</dbReference>
<dbReference type="RefSeq" id="WP_006575661.1">
    <property type="nucleotide sequence ID" value="NZ_CP039287.1"/>
</dbReference>
<dbReference type="SMR" id="Q0K7B2"/>
<dbReference type="STRING" id="381666.H16_A3034"/>
<dbReference type="GeneID" id="70691035"/>
<dbReference type="KEGG" id="reh:H16_A3034"/>
<dbReference type="eggNOG" id="COG0227">
    <property type="taxonomic scope" value="Bacteria"/>
</dbReference>
<dbReference type="HOGENOM" id="CLU_064548_3_1_4"/>
<dbReference type="OrthoDB" id="9805609at2"/>
<dbReference type="Proteomes" id="UP000008210">
    <property type="component" value="Chromosome 1"/>
</dbReference>
<dbReference type="GO" id="GO:0022625">
    <property type="term" value="C:cytosolic large ribosomal subunit"/>
    <property type="evidence" value="ECO:0007669"/>
    <property type="project" value="TreeGrafter"/>
</dbReference>
<dbReference type="GO" id="GO:0003735">
    <property type="term" value="F:structural constituent of ribosome"/>
    <property type="evidence" value="ECO:0007669"/>
    <property type="project" value="InterPro"/>
</dbReference>
<dbReference type="GO" id="GO:0006412">
    <property type="term" value="P:translation"/>
    <property type="evidence" value="ECO:0007669"/>
    <property type="project" value="UniProtKB-UniRule"/>
</dbReference>
<dbReference type="FunFam" id="2.30.170.40:FF:000001">
    <property type="entry name" value="50S ribosomal protein L28"/>
    <property type="match status" value="1"/>
</dbReference>
<dbReference type="Gene3D" id="2.30.170.40">
    <property type="entry name" value="Ribosomal protein L28/L24"/>
    <property type="match status" value="1"/>
</dbReference>
<dbReference type="HAMAP" id="MF_00373">
    <property type="entry name" value="Ribosomal_bL28"/>
    <property type="match status" value="1"/>
</dbReference>
<dbReference type="InterPro" id="IPR026569">
    <property type="entry name" value="Ribosomal_bL28"/>
</dbReference>
<dbReference type="InterPro" id="IPR034704">
    <property type="entry name" value="Ribosomal_bL28/bL31-like_sf"/>
</dbReference>
<dbReference type="InterPro" id="IPR001383">
    <property type="entry name" value="Ribosomal_bL28_bact-type"/>
</dbReference>
<dbReference type="InterPro" id="IPR037147">
    <property type="entry name" value="Ribosomal_bL28_sf"/>
</dbReference>
<dbReference type="NCBIfam" id="TIGR00009">
    <property type="entry name" value="L28"/>
    <property type="match status" value="1"/>
</dbReference>
<dbReference type="PANTHER" id="PTHR13528">
    <property type="entry name" value="39S RIBOSOMAL PROTEIN L28, MITOCHONDRIAL"/>
    <property type="match status" value="1"/>
</dbReference>
<dbReference type="PANTHER" id="PTHR13528:SF2">
    <property type="entry name" value="LARGE RIBOSOMAL SUBUNIT PROTEIN BL28M"/>
    <property type="match status" value="1"/>
</dbReference>
<dbReference type="Pfam" id="PF00830">
    <property type="entry name" value="Ribosomal_L28"/>
    <property type="match status" value="1"/>
</dbReference>
<dbReference type="SUPFAM" id="SSF143800">
    <property type="entry name" value="L28p-like"/>
    <property type="match status" value="1"/>
</dbReference>
<organism>
    <name type="scientific">Cupriavidus necator (strain ATCC 17699 / DSM 428 / KCTC 22496 / NCIMB 10442 / H16 / Stanier 337)</name>
    <name type="common">Ralstonia eutropha</name>
    <dbReference type="NCBI Taxonomy" id="381666"/>
    <lineage>
        <taxon>Bacteria</taxon>
        <taxon>Pseudomonadati</taxon>
        <taxon>Pseudomonadota</taxon>
        <taxon>Betaproteobacteria</taxon>
        <taxon>Burkholderiales</taxon>
        <taxon>Burkholderiaceae</taxon>
        <taxon>Cupriavidus</taxon>
    </lineage>
</organism>
<accession>Q0K7B2</accession>
<proteinExistence type="inferred from homology"/>
<sequence length="77" mass="8707">MARVCQVTGKAPMVGNNVSHANNKTKRRFLPNLQNRRFFVESENRWVSLRVSNAGLRLIDKKGIDSVLADLRARGEV</sequence>
<protein>
    <recommendedName>
        <fullName evidence="1">Large ribosomal subunit protein bL28</fullName>
    </recommendedName>
    <alternativeName>
        <fullName evidence="2">50S ribosomal protein L28</fullName>
    </alternativeName>
</protein>
<feature type="chain" id="PRO_1000007323" description="Large ribosomal subunit protein bL28">
    <location>
        <begin position="1"/>
        <end position="77"/>
    </location>
</feature>
<comment type="similarity">
    <text evidence="1">Belongs to the bacterial ribosomal protein bL28 family.</text>
</comment>